<name>FREM3_MOUSE</name>
<keyword id="KW-0106">Calcium</keyword>
<keyword id="KW-0130">Cell adhesion</keyword>
<keyword id="KW-0272">Extracellular matrix</keyword>
<keyword id="KW-0325">Glycoprotein</keyword>
<keyword id="KW-0479">Metal-binding</keyword>
<keyword id="KW-1185">Reference proteome</keyword>
<keyword id="KW-0677">Repeat</keyword>
<keyword id="KW-0964">Secreted</keyword>
<keyword id="KW-0732">Signal</keyword>
<gene>
    <name type="primary">Frem3</name>
    <name type="synonym">Gm795</name>
    <name type="synonym">Nv2</name>
</gene>
<evidence type="ECO:0000250" key="1"/>
<evidence type="ECO:0000255" key="2"/>
<evidence type="ECO:0000255" key="3">
    <source>
        <dbReference type="PROSITE-ProRule" id="PRU01201"/>
    </source>
</evidence>
<evidence type="ECO:0000256" key="4">
    <source>
        <dbReference type="SAM" id="MobiDB-lite"/>
    </source>
</evidence>
<evidence type="ECO:0000305" key="5"/>
<protein>
    <recommendedName>
        <fullName>FRAS1-related extracellular matrix protein 3</fullName>
    </recommendedName>
    <alternativeName>
        <fullName>NV domain-containing protein 2</fullName>
    </alternativeName>
</protein>
<organism>
    <name type="scientific">Mus musculus</name>
    <name type="common">Mouse</name>
    <dbReference type="NCBI Taxonomy" id="10090"/>
    <lineage>
        <taxon>Eukaryota</taxon>
        <taxon>Metazoa</taxon>
        <taxon>Chordata</taxon>
        <taxon>Craniata</taxon>
        <taxon>Vertebrata</taxon>
        <taxon>Euteleostomi</taxon>
        <taxon>Mammalia</taxon>
        <taxon>Eutheria</taxon>
        <taxon>Euarchontoglires</taxon>
        <taxon>Glires</taxon>
        <taxon>Rodentia</taxon>
        <taxon>Myomorpha</taxon>
        <taxon>Muroidea</taxon>
        <taxon>Muridae</taxon>
        <taxon>Murinae</taxon>
        <taxon>Mus</taxon>
        <taxon>Mus</taxon>
    </lineage>
</organism>
<sequence length="2123" mass="234999">MAGDSLSLPGMSLQLLVTLTCLLLTCALRERVPLSENVSHCELYLPPWGALNGGSHQNPGILIANSGFQVPQGRSVWLNPLRDLVIRVQRGDQCKVTVLDFPRLQGALSPHQFPCDFGAQQVKYTHFGSPSSTRTRIQLQVRYDAGNSTLVLPFTLQVNVVFPKLQLVARNRPLKVFKVLGCSHAIDRRVLNFASRSRCRLTVLPHPGGPLPKYGLLVDTAGNPLSRGHLADCEAFIQAGVRYQHTTTPSSPSRDYVPMLVELLGPESQGTRSVEVLAQEYFQIQVRIQKRARSTAPIPSLAALMIVEVEQSLLTALTPDVLAAEDSESDPDDLVFNILNVPEAPPGHHGGQGYVVNTDDPLGLPVSFFTQKELRELKIAYRPPTGSSEGDHVFQLKLQVVDEDGDTSEPFAFMVVVKSMNVLAPIASYRGGLVVFEGQARPLSDALSFQVSDKDNSKEIKIVAVRGLQHGQLVVHGAPAGCKNFTLADLSAGRVVYQHDGSDSYSDNIILKMEGEHHRVDFLFPITIVPVDDAAPVLTANMGLSVTEGQVVQISPFVLCATDIDSEDSAILFVLEDEHLEGKEEETHEDLAPGSYSSSQHPGNMLLRQAEPPSSLLYSDWHYVEKEGLYETVVTEWLQRDIMEGRLFFSHPGPHSPSPVAHLAFHVQDDQDPPNLSNQHFFTISIQPADTSQPQLSPETTLEMTVQGYQLTPFQQKYLQYTDQNSDEQNLWYTLLTRPTDADSNHQVQAGEIVLTDSPGRPIVHFTQTQVNHQKIAYRPPQRNLGIVPRVVQFTYKVEDTAGNSVSGTFTVFLQPLNNQPPKVINRGFAVLEGDSFILGRGELNVSDPDTNDDQIFFILVWGPQHGHLQYFKKYMVPGESFMLADVINGSISYQNSRDQTDSDVIYLEVSDGVHHIPITVQVSVQPTVADRSPGISITGTPVLATSLTVLENAASEITMDVTHGRKNTNDLMLSFIVEDKPKLGMILVNGWPAEQVTQEDLLGGAVSYVHTSGEIGFQRVHDTFSFILSKDAYHRAMRDNILERVLVEVTVLPVDNMAPKVLVRKPFIVYEGGKNLLTPQHVNIEDVDTSKDEILCTLTVQPSSGYLENLAPAPGSEVSRAGNPISAFFVKDVRVGCINYVQSIHKGIEPGADQFTFYCSDGINFSPKVLLPLTILPTNDEQPQLFTREFVVLEGMSRVIDTSLVNGVDADFPSDKHFRLTVFPQHGQITQQLATGSKPIHSFTLQEIQEPSSIAYEHDDSESTEDSFEVWLSDGRHTTHTTVPIAVILVDDEVPQLTINDGLEIETGHSEIITNHILKAIDLDSDNKSLSFVLHSEPQQGLLQRLRKPGGDAKHNLTVGMNFTQDEIDRGLIHYIHTGQGEAVDLKFDVTDGVNTLRDRYFYITIDNSNSAVPEIVSKRVTLTEGNRMTLTTELLNTSDIHSPGEQLLYSITRAPSTGHLESSDQPGEPMASFTQLQLARNKISYVHISNDKIKLDHFELRVTGGHHSESRIFRIFVTEQDNKKPTLTIQALALQRGDNIVVTPSQLTVEDEDTPADFILFTITQIPIHGRILYNGSRPVTTFTKKDLTKSLIYCHDGSETSKDSFSFTVTDGIHTGFYVFPDTSLETHVPQTVWIQISPFDDRLPQMGINRGATALKLLHTGHLGFLITNEYLQATHQGVPHRLLTYKVTRGPEHGYIVNAGLGNENTHMFTQADIDEMRVYYILNKGRGRATRDTFYFSVETRGGKQLRNQPFHLNWAWISLEKEYYIVDEDSPFFEVTLRRGYLGGTSVVSIGTKGDTAEENKDFKGKAPMLVQFSPGQSTATWRVGLIPDTKYETSETFQIILSEPGAAALEFPEMATVEIVDPEDESTVYIPEAEYQLAEAVGEFLVPVRRSGDTSQELTVICSTRPGSATGTIPSVQLSLSDYVSRPEDNTSMLHFEKDESEKTCQVLIINDSLYEEEESFSIALSLPTGGQLGAKFPTARVTILADREDEPALHFECSEYHAEESAGYVEVAVWRRGTGLSQASSVIVRSRGTEEQAAEAGTDYIGVRQHLHFSPGVSVQRLRVTILDDLPQPAFEGPEMFELLLQMPTGAVIGEPNKTTVTINDSVTNCEECV</sequence>
<comment type="function">
    <text evidence="1">Extracellular matrix protein which may play a role in cell adhesion.</text>
</comment>
<comment type="subcellular location">
    <subcellularLocation>
        <location evidence="1">Secreted</location>
        <location evidence="1">Extracellular space</location>
        <location evidence="1">Extracellular matrix</location>
    </subcellularLocation>
</comment>
<comment type="domain">
    <text evidence="1">The Calx-beta domains bind calcium with high affinity and undergo a major conformational shift upon binding.</text>
</comment>
<comment type="similarity">
    <text evidence="5">Belongs to the FRAS1 family.</text>
</comment>
<accession>Q5H8B9</accession>
<reference key="1">
    <citation type="journal article" date="2009" name="PLoS Biol.">
        <title>Lineage-specific biology revealed by a finished genome assembly of the mouse.</title>
        <authorList>
            <person name="Church D.M."/>
            <person name="Goodstadt L."/>
            <person name="Hillier L.W."/>
            <person name="Zody M.C."/>
            <person name="Goldstein S."/>
            <person name="She X."/>
            <person name="Bult C.J."/>
            <person name="Agarwala R."/>
            <person name="Cherry J.L."/>
            <person name="DiCuccio M."/>
            <person name="Hlavina W."/>
            <person name="Kapustin Y."/>
            <person name="Meric P."/>
            <person name="Maglott D."/>
            <person name="Birtle Z."/>
            <person name="Marques A.C."/>
            <person name="Graves T."/>
            <person name="Zhou S."/>
            <person name="Teague B."/>
            <person name="Potamousis K."/>
            <person name="Churas C."/>
            <person name="Place M."/>
            <person name="Herschleb J."/>
            <person name="Runnheim R."/>
            <person name="Forrest D."/>
            <person name="Amos-Landgraf J."/>
            <person name="Schwartz D.C."/>
            <person name="Cheng Z."/>
            <person name="Lindblad-Toh K."/>
            <person name="Eichler E.E."/>
            <person name="Ponting C.P."/>
        </authorList>
    </citation>
    <scope>NUCLEOTIDE SEQUENCE [LARGE SCALE GENOMIC DNA]</scope>
    <source>
        <strain>C57BL/6J</strain>
    </source>
</reference>
<reference key="2">
    <citation type="journal article" date="2005" name="Exp. Cell Res.">
        <title>Identification of a novel cell-adhesive protein spatiotemporally expressed in the basement membrane of mouse developing hair follicle.</title>
        <authorList>
            <person name="Kiyozumi D."/>
            <person name="Osada A."/>
            <person name="Sugimoto N."/>
            <person name="Weber C.N."/>
            <person name="Ono Y."/>
            <person name="Imai T."/>
            <person name="Okada A."/>
            <person name="Sekiguchi K."/>
        </authorList>
    </citation>
    <scope>NUCLEOTIDE SEQUENCE [MRNA] OF 1-271</scope>
</reference>
<reference key="3">
    <citation type="journal article" date="2004" name="Proc. Natl. Acad. Sci. U.S.A.">
        <title>The extracellular matrix gene Frem1 is essential for the normal adhesion of the embryonic epidermis.</title>
        <authorList>
            <person name="Smyth I."/>
            <person name="Du X."/>
            <person name="Taylor M.S."/>
            <person name="Justice M.J."/>
            <person name="Beutler B."/>
            <person name="Jackson I.J."/>
        </authorList>
    </citation>
    <scope>IDENTIFICATION</scope>
</reference>
<dbReference type="EMBL" id="AC130675">
    <property type="status" value="NOT_ANNOTATED_CDS"/>
    <property type="molecule type" value="Genomic_DNA"/>
</dbReference>
<dbReference type="EMBL" id="AC132606">
    <property type="status" value="NOT_ANNOTATED_CDS"/>
    <property type="molecule type" value="Genomic_DNA"/>
</dbReference>
<dbReference type="EMBL" id="AB160989">
    <property type="protein sequence ID" value="BAD89017.1"/>
    <property type="molecule type" value="mRNA"/>
</dbReference>
<dbReference type="FunCoup" id="Q5H8B9">
    <property type="interactions" value="6"/>
</dbReference>
<dbReference type="STRING" id="10090.ENSMUSP00000038015"/>
<dbReference type="GlyCosmos" id="Q5H8B9">
    <property type="glycosylation" value="5 sites, No reported glycans"/>
</dbReference>
<dbReference type="GlyGen" id="Q5H8B9">
    <property type="glycosylation" value="9 sites, 3 N-linked glycans (5 sites)"/>
</dbReference>
<dbReference type="iPTMnet" id="Q5H8B9"/>
<dbReference type="PhosphoSitePlus" id="Q5H8B9"/>
<dbReference type="PaxDb" id="10090-ENSMUSP00000038015"/>
<dbReference type="ProteomicsDB" id="267625"/>
<dbReference type="AGR" id="MGI:2685641"/>
<dbReference type="MGI" id="MGI:2685641">
    <property type="gene designation" value="Frem3"/>
</dbReference>
<dbReference type="eggNOG" id="KOG1306">
    <property type="taxonomic scope" value="Eukaryota"/>
</dbReference>
<dbReference type="eggNOG" id="KOG3597">
    <property type="taxonomic scope" value="Eukaryota"/>
</dbReference>
<dbReference type="InParanoid" id="Q5H8B9"/>
<dbReference type="PRO" id="PR:Q5H8B9"/>
<dbReference type="Proteomes" id="UP000000589">
    <property type="component" value="Unplaced"/>
</dbReference>
<dbReference type="RNAct" id="Q5H8B9">
    <property type="molecule type" value="protein"/>
</dbReference>
<dbReference type="GO" id="GO:0005604">
    <property type="term" value="C:basement membrane"/>
    <property type="evidence" value="ECO:0000314"/>
    <property type="project" value="BHF-UCL"/>
</dbReference>
<dbReference type="GO" id="GO:0005576">
    <property type="term" value="C:extracellular region"/>
    <property type="evidence" value="ECO:0007669"/>
    <property type="project" value="UniProtKB-KW"/>
</dbReference>
<dbReference type="GO" id="GO:0016020">
    <property type="term" value="C:membrane"/>
    <property type="evidence" value="ECO:0007669"/>
    <property type="project" value="InterPro"/>
</dbReference>
<dbReference type="GO" id="GO:0046872">
    <property type="term" value="F:metal ion binding"/>
    <property type="evidence" value="ECO:0007669"/>
    <property type="project" value="UniProtKB-KW"/>
</dbReference>
<dbReference type="GO" id="GO:0007155">
    <property type="term" value="P:cell adhesion"/>
    <property type="evidence" value="ECO:0007669"/>
    <property type="project" value="UniProtKB-KW"/>
</dbReference>
<dbReference type="GO" id="GO:0007154">
    <property type="term" value="P:cell communication"/>
    <property type="evidence" value="ECO:0007669"/>
    <property type="project" value="InterPro"/>
</dbReference>
<dbReference type="Gene3D" id="2.60.40.2030">
    <property type="match status" value="3"/>
</dbReference>
<dbReference type="InterPro" id="IPR038081">
    <property type="entry name" value="CalX-like_sf"/>
</dbReference>
<dbReference type="InterPro" id="IPR003644">
    <property type="entry name" value="Calx_beta"/>
</dbReference>
<dbReference type="InterPro" id="IPR039005">
    <property type="entry name" value="CSPG_rpt"/>
</dbReference>
<dbReference type="InterPro" id="IPR045658">
    <property type="entry name" value="FRAS1-rel_N"/>
</dbReference>
<dbReference type="InterPro" id="IPR051561">
    <property type="entry name" value="FRAS1_ECM"/>
</dbReference>
<dbReference type="PANTHER" id="PTHR45739:SF5">
    <property type="entry name" value="FRAS1-RELATED EXTRACELLULAR MATRIX PROTEIN 3"/>
    <property type="match status" value="1"/>
</dbReference>
<dbReference type="PANTHER" id="PTHR45739">
    <property type="entry name" value="MATRIX PROTEIN, PUTATIVE-RELATED"/>
    <property type="match status" value="1"/>
</dbReference>
<dbReference type="Pfam" id="PF16184">
    <property type="entry name" value="Cadherin_3"/>
    <property type="match status" value="10"/>
</dbReference>
<dbReference type="Pfam" id="PF03160">
    <property type="entry name" value="Calx-beta"/>
    <property type="match status" value="2"/>
</dbReference>
<dbReference type="Pfam" id="PF19309">
    <property type="entry name" value="Frem_N"/>
    <property type="match status" value="1"/>
</dbReference>
<dbReference type="SMART" id="SM00237">
    <property type="entry name" value="Calx_beta"/>
    <property type="match status" value="3"/>
</dbReference>
<dbReference type="SUPFAM" id="SSF141072">
    <property type="entry name" value="CalX-like"/>
    <property type="match status" value="3"/>
</dbReference>
<dbReference type="PROSITE" id="PS51854">
    <property type="entry name" value="CSPG"/>
    <property type="match status" value="12"/>
</dbReference>
<feature type="signal peptide" evidence="2">
    <location>
        <begin position="1"/>
        <end position="27"/>
    </location>
</feature>
<feature type="chain" id="PRO_0000010128" description="FRAS1-related extracellular matrix protein 3">
    <location>
        <begin position="28"/>
        <end position="2123"/>
    </location>
</feature>
<feature type="repeat" description="CSPG 1" evidence="3">
    <location>
        <begin position="298"/>
        <end position="399"/>
    </location>
</feature>
<feature type="repeat" description="CSPG 2" evidence="3">
    <location>
        <begin position="424"/>
        <end position="514"/>
    </location>
</feature>
<feature type="repeat" description="CSPG 3" evidence="3">
    <location>
        <begin position="535"/>
        <end position="668"/>
    </location>
</feature>
<feature type="repeat" description="CSPG 4" evidence="3">
    <location>
        <begin position="693"/>
        <end position="799"/>
    </location>
</feature>
<feature type="repeat" description="CSPG 5" evidence="3">
    <location>
        <begin position="820"/>
        <end position="911"/>
    </location>
</feature>
<feature type="repeat" description="CSPG 6" evidence="3">
    <location>
        <begin position="939"/>
        <end position="1030"/>
    </location>
</feature>
<feature type="repeat" description="CSPG 7" evidence="3">
    <location>
        <begin position="1059"/>
        <end position="1161"/>
    </location>
</feature>
<feature type="repeat" description="CSPG 8" evidence="3">
    <location>
        <begin position="1182"/>
        <end position="1274"/>
    </location>
</feature>
<feature type="repeat" description="CSPG 9" evidence="3">
    <location>
        <begin position="1295"/>
        <end position="1394"/>
    </location>
</feature>
<feature type="repeat" description="CSPG 10" evidence="3">
    <location>
        <begin position="1413"/>
        <end position="1505"/>
    </location>
</feature>
<feature type="repeat" description="CSPG 11" evidence="3">
    <location>
        <begin position="1525"/>
        <end position="1613"/>
    </location>
</feature>
<feature type="repeat" description="CSPG 12" evidence="3">
    <location>
        <begin position="1647"/>
        <end position="1745"/>
    </location>
</feature>
<feature type="domain" description="Calx-beta 1">
    <location>
        <begin position="1752"/>
        <end position="1850"/>
    </location>
</feature>
<feature type="domain" description="Calx-beta 2">
    <location>
        <begin position="1863"/>
        <end position="1974"/>
    </location>
</feature>
<feature type="domain" description="Calx-beta 3">
    <location>
        <begin position="1989"/>
        <end position="2095"/>
    </location>
</feature>
<feature type="region of interest" description="Disordered" evidence="4">
    <location>
        <begin position="582"/>
        <end position="601"/>
    </location>
</feature>
<feature type="compositionally biased region" description="Basic and acidic residues" evidence="4">
    <location>
        <begin position="582"/>
        <end position="591"/>
    </location>
</feature>
<feature type="glycosylation site" description="N-linked (GlcNAc...) asparagine" evidence="2">
    <location>
        <position position="37"/>
    </location>
</feature>
<feature type="glycosylation site" description="N-linked (GlcNAc...) asparagine" evidence="2">
    <location>
        <position position="147"/>
    </location>
</feature>
<feature type="glycosylation site" description="N-linked (GlcNAc...) asparagine" evidence="2">
    <location>
        <position position="484"/>
    </location>
</feature>
<feature type="glycosylation site" description="N-linked (GlcNAc...) asparagine" evidence="2">
    <location>
        <position position="845"/>
    </location>
</feature>
<feature type="glycosylation site" description="N-linked (GlcNAc...) asparagine" evidence="2">
    <location>
        <position position="1577"/>
    </location>
</feature>
<proteinExistence type="evidence at transcript level"/>